<comment type="alternative products">
    <event type="alternative splicing"/>
    <isoform>
        <id>Q5I0G3-1</id>
        <name>1</name>
        <sequence type="displayed"/>
    </isoform>
    <isoform>
        <id>Q5I0G3-2</id>
        <name>2</name>
        <sequence type="described" ref="VSP_033201"/>
    </isoform>
    <isoform>
        <id>Q5I0G3-3</id>
        <name>3</name>
        <sequence type="described" ref="VSP_033199 VSP_033200"/>
    </isoform>
</comment>
<comment type="similarity">
    <text evidence="4">Belongs to the LDH/MDH superfamily. MDH type 2 family.</text>
</comment>
<accession>Q5I0G3</accession>
<accession>A8K8M1</accession>
<accession>Q53TK9</accession>
<accession>Q8IV51</accession>
<keyword id="KW-0025">Alternative splicing</keyword>
<keyword id="KW-0520">NAD</keyword>
<keyword id="KW-0560">Oxidoreductase</keyword>
<keyword id="KW-1267">Proteomics identification</keyword>
<keyword id="KW-1185">Reference proteome</keyword>
<keyword id="KW-0816">Tricarboxylic acid cycle</keyword>
<protein>
    <recommendedName>
        <fullName>Putative malate dehydrogenase 1B</fullName>
        <ecNumber>1.1.1.-</ecNumber>
    </recommendedName>
</protein>
<gene>
    <name type="primary">MDH1B</name>
</gene>
<reference key="1">
    <citation type="journal article" date="2004" name="Nat. Genet.">
        <title>Complete sequencing and characterization of 21,243 full-length human cDNAs.</title>
        <authorList>
            <person name="Ota T."/>
            <person name="Suzuki Y."/>
            <person name="Nishikawa T."/>
            <person name="Otsuki T."/>
            <person name="Sugiyama T."/>
            <person name="Irie R."/>
            <person name="Wakamatsu A."/>
            <person name="Hayashi K."/>
            <person name="Sato H."/>
            <person name="Nagai K."/>
            <person name="Kimura K."/>
            <person name="Makita H."/>
            <person name="Sekine M."/>
            <person name="Obayashi M."/>
            <person name="Nishi T."/>
            <person name="Shibahara T."/>
            <person name="Tanaka T."/>
            <person name="Ishii S."/>
            <person name="Yamamoto J."/>
            <person name="Saito K."/>
            <person name="Kawai Y."/>
            <person name="Isono Y."/>
            <person name="Nakamura Y."/>
            <person name="Nagahari K."/>
            <person name="Murakami K."/>
            <person name="Yasuda T."/>
            <person name="Iwayanagi T."/>
            <person name="Wagatsuma M."/>
            <person name="Shiratori A."/>
            <person name="Sudo H."/>
            <person name="Hosoiri T."/>
            <person name="Kaku Y."/>
            <person name="Kodaira H."/>
            <person name="Kondo H."/>
            <person name="Sugawara M."/>
            <person name="Takahashi M."/>
            <person name="Kanda K."/>
            <person name="Yokoi T."/>
            <person name="Furuya T."/>
            <person name="Kikkawa E."/>
            <person name="Omura Y."/>
            <person name="Abe K."/>
            <person name="Kamihara K."/>
            <person name="Katsuta N."/>
            <person name="Sato K."/>
            <person name="Tanikawa M."/>
            <person name="Yamazaki M."/>
            <person name="Ninomiya K."/>
            <person name="Ishibashi T."/>
            <person name="Yamashita H."/>
            <person name="Murakawa K."/>
            <person name="Fujimori K."/>
            <person name="Tanai H."/>
            <person name="Kimata M."/>
            <person name="Watanabe M."/>
            <person name="Hiraoka S."/>
            <person name="Chiba Y."/>
            <person name="Ishida S."/>
            <person name="Ono Y."/>
            <person name="Takiguchi S."/>
            <person name="Watanabe S."/>
            <person name="Yosida M."/>
            <person name="Hotuta T."/>
            <person name="Kusano J."/>
            <person name="Kanehori K."/>
            <person name="Takahashi-Fujii A."/>
            <person name="Hara H."/>
            <person name="Tanase T.-O."/>
            <person name="Nomura Y."/>
            <person name="Togiya S."/>
            <person name="Komai F."/>
            <person name="Hara R."/>
            <person name="Takeuchi K."/>
            <person name="Arita M."/>
            <person name="Imose N."/>
            <person name="Musashino K."/>
            <person name="Yuuki H."/>
            <person name="Oshima A."/>
            <person name="Sasaki N."/>
            <person name="Aotsuka S."/>
            <person name="Yoshikawa Y."/>
            <person name="Matsunawa H."/>
            <person name="Ichihara T."/>
            <person name="Shiohata N."/>
            <person name="Sano S."/>
            <person name="Moriya S."/>
            <person name="Momiyama H."/>
            <person name="Satoh N."/>
            <person name="Takami S."/>
            <person name="Terashima Y."/>
            <person name="Suzuki O."/>
            <person name="Nakagawa S."/>
            <person name="Senoh A."/>
            <person name="Mizoguchi H."/>
            <person name="Goto Y."/>
            <person name="Shimizu F."/>
            <person name="Wakebe H."/>
            <person name="Hishigaki H."/>
            <person name="Watanabe T."/>
            <person name="Sugiyama A."/>
            <person name="Takemoto M."/>
            <person name="Kawakami B."/>
            <person name="Yamazaki M."/>
            <person name="Watanabe K."/>
            <person name="Kumagai A."/>
            <person name="Itakura S."/>
            <person name="Fukuzumi Y."/>
            <person name="Fujimori Y."/>
            <person name="Komiyama M."/>
            <person name="Tashiro H."/>
            <person name="Tanigami A."/>
            <person name="Fujiwara T."/>
            <person name="Ono T."/>
            <person name="Yamada K."/>
            <person name="Fujii Y."/>
            <person name="Ozaki K."/>
            <person name="Hirao M."/>
            <person name="Ohmori Y."/>
            <person name="Kawabata A."/>
            <person name="Hikiji T."/>
            <person name="Kobatake N."/>
            <person name="Inagaki H."/>
            <person name="Ikema Y."/>
            <person name="Okamoto S."/>
            <person name="Okitani R."/>
            <person name="Kawakami T."/>
            <person name="Noguchi S."/>
            <person name="Itoh T."/>
            <person name="Shigeta K."/>
            <person name="Senba T."/>
            <person name="Matsumura K."/>
            <person name="Nakajima Y."/>
            <person name="Mizuno T."/>
            <person name="Morinaga M."/>
            <person name="Sasaki M."/>
            <person name="Togashi T."/>
            <person name="Oyama M."/>
            <person name="Hata H."/>
            <person name="Watanabe M."/>
            <person name="Komatsu T."/>
            <person name="Mizushima-Sugano J."/>
            <person name="Satoh T."/>
            <person name="Shirai Y."/>
            <person name="Takahashi Y."/>
            <person name="Nakagawa K."/>
            <person name="Okumura K."/>
            <person name="Nagase T."/>
            <person name="Nomura N."/>
            <person name="Kikuchi H."/>
            <person name="Masuho Y."/>
            <person name="Yamashita R."/>
            <person name="Nakai K."/>
            <person name="Yada T."/>
            <person name="Nakamura Y."/>
            <person name="Ohara O."/>
            <person name="Isogai T."/>
            <person name="Sugano S."/>
        </authorList>
    </citation>
    <scope>NUCLEOTIDE SEQUENCE [LARGE SCALE MRNA] (ISOFORMS 1 AND 2)</scope>
    <source>
        <tissue>Testis</tissue>
    </source>
</reference>
<reference key="2">
    <citation type="journal article" date="2005" name="Nature">
        <title>Generation and annotation of the DNA sequences of human chromosomes 2 and 4.</title>
        <authorList>
            <person name="Hillier L.W."/>
            <person name="Graves T.A."/>
            <person name="Fulton R.S."/>
            <person name="Fulton L.A."/>
            <person name="Pepin K.H."/>
            <person name="Minx P."/>
            <person name="Wagner-McPherson C."/>
            <person name="Layman D."/>
            <person name="Wylie K."/>
            <person name="Sekhon M."/>
            <person name="Becker M.C."/>
            <person name="Fewell G.A."/>
            <person name="Delehaunty K.D."/>
            <person name="Miner T.L."/>
            <person name="Nash W.E."/>
            <person name="Kremitzki C."/>
            <person name="Oddy L."/>
            <person name="Du H."/>
            <person name="Sun H."/>
            <person name="Bradshaw-Cordum H."/>
            <person name="Ali J."/>
            <person name="Carter J."/>
            <person name="Cordes M."/>
            <person name="Harris A."/>
            <person name="Isak A."/>
            <person name="van Brunt A."/>
            <person name="Nguyen C."/>
            <person name="Du F."/>
            <person name="Courtney L."/>
            <person name="Kalicki J."/>
            <person name="Ozersky P."/>
            <person name="Abbott S."/>
            <person name="Armstrong J."/>
            <person name="Belter E.A."/>
            <person name="Caruso L."/>
            <person name="Cedroni M."/>
            <person name="Cotton M."/>
            <person name="Davidson T."/>
            <person name="Desai A."/>
            <person name="Elliott G."/>
            <person name="Erb T."/>
            <person name="Fronick C."/>
            <person name="Gaige T."/>
            <person name="Haakenson W."/>
            <person name="Haglund K."/>
            <person name="Holmes A."/>
            <person name="Harkins R."/>
            <person name="Kim K."/>
            <person name="Kruchowski S.S."/>
            <person name="Strong C.M."/>
            <person name="Grewal N."/>
            <person name="Goyea E."/>
            <person name="Hou S."/>
            <person name="Levy A."/>
            <person name="Martinka S."/>
            <person name="Mead K."/>
            <person name="McLellan M.D."/>
            <person name="Meyer R."/>
            <person name="Randall-Maher J."/>
            <person name="Tomlinson C."/>
            <person name="Dauphin-Kohlberg S."/>
            <person name="Kozlowicz-Reilly A."/>
            <person name="Shah N."/>
            <person name="Swearengen-Shahid S."/>
            <person name="Snider J."/>
            <person name="Strong J.T."/>
            <person name="Thompson J."/>
            <person name="Yoakum M."/>
            <person name="Leonard S."/>
            <person name="Pearman C."/>
            <person name="Trani L."/>
            <person name="Radionenko M."/>
            <person name="Waligorski J.E."/>
            <person name="Wang C."/>
            <person name="Rock S.M."/>
            <person name="Tin-Wollam A.-M."/>
            <person name="Maupin R."/>
            <person name="Latreille P."/>
            <person name="Wendl M.C."/>
            <person name="Yang S.-P."/>
            <person name="Pohl C."/>
            <person name="Wallis J.W."/>
            <person name="Spieth J."/>
            <person name="Bieri T.A."/>
            <person name="Berkowicz N."/>
            <person name="Nelson J.O."/>
            <person name="Osborne J."/>
            <person name="Ding L."/>
            <person name="Meyer R."/>
            <person name="Sabo A."/>
            <person name="Shotland Y."/>
            <person name="Sinha P."/>
            <person name="Wohldmann P.E."/>
            <person name="Cook L.L."/>
            <person name="Hickenbotham M.T."/>
            <person name="Eldred J."/>
            <person name="Williams D."/>
            <person name="Jones T.A."/>
            <person name="She X."/>
            <person name="Ciccarelli F.D."/>
            <person name="Izaurralde E."/>
            <person name="Taylor J."/>
            <person name="Schmutz J."/>
            <person name="Myers R.M."/>
            <person name="Cox D.R."/>
            <person name="Huang X."/>
            <person name="McPherson J.D."/>
            <person name="Mardis E.R."/>
            <person name="Clifton S.W."/>
            <person name="Warren W.C."/>
            <person name="Chinwalla A.T."/>
            <person name="Eddy S.R."/>
            <person name="Marra M.A."/>
            <person name="Ovcharenko I."/>
            <person name="Furey T.S."/>
            <person name="Miller W."/>
            <person name="Eichler E.E."/>
            <person name="Bork P."/>
            <person name="Suyama M."/>
            <person name="Torrents D."/>
            <person name="Waterston R.H."/>
            <person name="Wilson R.K."/>
        </authorList>
    </citation>
    <scope>NUCLEOTIDE SEQUENCE [LARGE SCALE GENOMIC DNA]</scope>
</reference>
<reference key="3">
    <citation type="submission" date="2005-07" db="EMBL/GenBank/DDBJ databases">
        <authorList>
            <person name="Mural R.J."/>
            <person name="Istrail S."/>
            <person name="Sutton G.G."/>
            <person name="Florea L."/>
            <person name="Halpern A.L."/>
            <person name="Mobarry C.M."/>
            <person name="Lippert R."/>
            <person name="Walenz B."/>
            <person name="Shatkay H."/>
            <person name="Dew I."/>
            <person name="Miller J.R."/>
            <person name="Flanigan M.J."/>
            <person name="Edwards N.J."/>
            <person name="Bolanos R."/>
            <person name="Fasulo D."/>
            <person name="Halldorsson B.V."/>
            <person name="Hannenhalli S."/>
            <person name="Turner R."/>
            <person name="Yooseph S."/>
            <person name="Lu F."/>
            <person name="Nusskern D.R."/>
            <person name="Shue B.C."/>
            <person name="Zheng X.H."/>
            <person name="Zhong F."/>
            <person name="Delcher A.L."/>
            <person name="Huson D.H."/>
            <person name="Kravitz S.A."/>
            <person name="Mouchard L."/>
            <person name="Reinert K."/>
            <person name="Remington K.A."/>
            <person name="Clark A.G."/>
            <person name="Waterman M.S."/>
            <person name="Eichler E.E."/>
            <person name="Adams M.D."/>
            <person name="Hunkapiller M.W."/>
            <person name="Myers E.W."/>
            <person name="Venter J.C."/>
        </authorList>
    </citation>
    <scope>NUCLEOTIDE SEQUENCE [LARGE SCALE GENOMIC DNA]</scope>
</reference>
<reference key="4">
    <citation type="journal article" date="2004" name="Genome Res.">
        <title>The status, quality, and expansion of the NIH full-length cDNA project: the Mammalian Gene Collection (MGC).</title>
        <authorList>
            <consortium name="The MGC Project Team"/>
        </authorList>
    </citation>
    <scope>NUCLEOTIDE SEQUENCE [LARGE SCALE MRNA] (ISOFORMS 1 AND 3)</scope>
    <source>
        <tissue>Brain</tissue>
        <tissue>Testis</tissue>
    </source>
</reference>
<reference key="5">
    <citation type="journal article" date="2011" name="Nature">
        <title>Exome sequencing identifies frequent mutation of the SWI/SNF complex gene PBRM1 in renal carcinoma.</title>
        <authorList>
            <person name="Varela I."/>
            <person name="Tarpey P."/>
            <person name="Raine K."/>
            <person name="Huang D."/>
            <person name="Ong C.K."/>
            <person name="Stephens P."/>
            <person name="Davies H."/>
            <person name="Jones D."/>
            <person name="Lin M.L."/>
            <person name="Teague J."/>
            <person name="Bignell G."/>
            <person name="Butler A."/>
            <person name="Cho J."/>
            <person name="Dalgliesh G.L."/>
            <person name="Galappaththige D."/>
            <person name="Greenman C."/>
            <person name="Hardy C."/>
            <person name="Jia M."/>
            <person name="Latimer C."/>
            <person name="Lau K.W."/>
            <person name="Marshall J."/>
            <person name="McLaren S."/>
            <person name="Menzies A."/>
            <person name="Mudie L."/>
            <person name="Stebbings L."/>
            <person name="Largaespada D.A."/>
            <person name="Wessels L.F.A."/>
            <person name="Richard S."/>
            <person name="Kahnoski R.J."/>
            <person name="Anema J."/>
            <person name="Tuveson D.A."/>
            <person name="Perez-Mancera P.A."/>
            <person name="Mustonen V."/>
            <person name="Fischer A."/>
            <person name="Adams D.J."/>
            <person name="Rust A."/>
            <person name="Chan-On W."/>
            <person name="Subimerb C."/>
            <person name="Dykema K."/>
            <person name="Furge K."/>
            <person name="Campbell P.J."/>
            <person name="Teh B.T."/>
            <person name="Stratton M.R."/>
            <person name="Futreal P.A."/>
        </authorList>
    </citation>
    <scope>VARIANT ILE-48</scope>
</reference>
<evidence type="ECO:0000269" key="1">
    <source>
    </source>
</evidence>
<evidence type="ECO:0000303" key="2">
    <source>
    </source>
</evidence>
<evidence type="ECO:0000303" key="3">
    <source>
    </source>
</evidence>
<evidence type="ECO:0000305" key="4"/>
<organism>
    <name type="scientific">Homo sapiens</name>
    <name type="common">Human</name>
    <dbReference type="NCBI Taxonomy" id="9606"/>
    <lineage>
        <taxon>Eukaryota</taxon>
        <taxon>Metazoa</taxon>
        <taxon>Chordata</taxon>
        <taxon>Craniata</taxon>
        <taxon>Vertebrata</taxon>
        <taxon>Euteleostomi</taxon>
        <taxon>Mammalia</taxon>
        <taxon>Eutheria</taxon>
        <taxon>Euarchontoglires</taxon>
        <taxon>Primates</taxon>
        <taxon>Haplorrhini</taxon>
        <taxon>Catarrhini</taxon>
        <taxon>Hominidae</taxon>
        <taxon>Homo</taxon>
    </lineage>
</organism>
<sequence>MAKFVIAGRADCPYYAKTELVADYLQKNLPDFRIHKITQRPEVWEDWLKDVCEKNKWSHKNSPIIWRELLDRGGKGLLLGGYNEFLEHAQLYYDVTSSMTTELMMVIAQENLGAHIEKEQEEEALKTCINPLQVWITSASAPACYNLIPILTSGEVFGMHTEISITLFDNKQAEEHLKSLVVETQDLASPVLRSVSICTKVEEAFRQAHVIVVLDDSTNKEVFTLEDCLRSRVPLCRLYGYLIEKNAHESVRVIVGGRTFVNLKTVLLMRYAPRIAHNIIAVALGVEGEAKAILARKLKTAPSYIKDVIIWGNISGNNYVDLRKTRVYRYESAIWGPLHYSRPVLNLIFDSEWVKREFVAILKNLTTTGRQFGGILAAHSIATTLKYWYHGSPPGEIVSLGILSEGQFGIPKGIVFSMPVKFENGTWVVLTDLKDVEISEQIMTRMTSDLIQEKLVALGDKIHFQPYQSGHKDLVPDEEKNLAMSDAAEFPNQIPQTTFEKPQSLEFLNEFEGKTVES</sequence>
<dbReference type="EC" id="1.1.1.-"/>
<dbReference type="EMBL" id="AK292378">
    <property type="protein sequence ID" value="BAF85067.1"/>
    <property type="molecule type" value="mRNA"/>
</dbReference>
<dbReference type="EMBL" id="AK292386">
    <property type="protein sequence ID" value="BAF85075.1"/>
    <property type="molecule type" value="mRNA"/>
</dbReference>
<dbReference type="EMBL" id="AC008269">
    <property type="protein sequence ID" value="AAX93274.1"/>
    <property type="molecule type" value="Genomic_DNA"/>
</dbReference>
<dbReference type="EMBL" id="CH471063">
    <property type="protein sequence ID" value="EAW70392.1"/>
    <property type="molecule type" value="Genomic_DNA"/>
</dbReference>
<dbReference type="EMBL" id="CH471063">
    <property type="protein sequence ID" value="EAW70393.1"/>
    <property type="molecule type" value="Genomic_DNA"/>
</dbReference>
<dbReference type="EMBL" id="BC033509">
    <property type="protein sequence ID" value="AAH33509.1"/>
    <property type="molecule type" value="mRNA"/>
</dbReference>
<dbReference type="EMBL" id="BC088356">
    <property type="protein sequence ID" value="AAH88356.1"/>
    <property type="molecule type" value="mRNA"/>
</dbReference>
<dbReference type="CCDS" id="CCDS33365.1">
    <molecule id="Q5I0G3-1"/>
</dbReference>
<dbReference type="CCDS" id="CCDS63102.1">
    <molecule id="Q5I0G3-2"/>
</dbReference>
<dbReference type="RefSeq" id="NP_001034934.1">
    <molecule id="Q5I0G3-1"/>
    <property type="nucleotide sequence ID" value="NM_001039845.3"/>
</dbReference>
<dbReference type="RefSeq" id="NP_001269869.1">
    <molecule id="Q5I0G3-2"/>
    <property type="nucleotide sequence ID" value="NM_001282940.2"/>
</dbReference>
<dbReference type="SMR" id="Q5I0G3"/>
<dbReference type="BioGRID" id="126253">
    <property type="interactions" value="2"/>
</dbReference>
<dbReference type="FunCoup" id="Q5I0G3">
    <property type="interactions" value="86"/>
</dbReference>
<dbReference type="IntAct" id="Q5I0G3">
    <property type="interactions" value="2"/>
</dbReference>
<dbReference type="STRING" id="9606.ENSP00000363533"/>
<dbReference type="GlyGen" id="Q5I0G3">
    <property type="glycosylation" value="1 site, 1 O-linked glycan (1 site)"/>
</dbReference>
<dbReference type="iPTMnet" id="Q5I0G3"/>
<dbReference type="PhosphoSitePlus" id="Q5I0G3"/>
<dbReference type="BioMuta" id="MDH1B"/>
<dbReference type="DMDM" id="74736109"/>
<dbReference type="MassIVE" id="Q5I0G3"/>
<dbReference type="PaxDb" id="9606-ENSP00000363533"/>
<dbReference type="PeptideAtlas" id="Q5I0G3"/>
<dbReference type="ProteomicsDB" id="62966">
    <molecule id="Q5I0G3-1"/>
</dbReference>
<dbReference type="ProteomicsDB" id="62967">
    <molecule id="Q5I0G3-2"/>
</dbReference>
<dbReference type="ProteomicsDB" id="62968">
    <molecule id="Q5I0G3-3"/>
</dbReference>
<dbReference type="Antibodypedia" id="34182">
    <property type="antibodies" value="88 antibodies from 18 providers"/>
</dbReference>
<dbReference type="DNASU" id="130752"/>
<dbReference type="Ensembl" id="ENST00000374412.8">
    <molecule id="Q5I0G3-1"/>
    <property type="protein sequence ID" value="ENSP00000363533.3"/>
    <property type="gene ID" value="ENSG00000138400.13"/>
</dbReference>
<dbReference type="Ensembl" id="ENST00000432911.5">
    <molecule id="Q5I0G3-3"/>
    <property type="protein sequence ID" value="ENSP00000392464.1"/>
    <property type="gene ID" value="ENSG00000138400.13"/>
</dbReference>
<dbReference type="Ensembl" id="ENST00000454776.6">
    <molecule id="Q5I0G3-2"/>
    <property type="protein sequence ID" value="ENSP00000389916.2"/>
    <property type="gene ID" value="ENSG00000138400.13"/>
</dbReference>
<dbReference type="GeneID" id="130752"/>
<dbReference type="KEGG" id="hsa:130752"/>
<dbReference type="MANE-Select" id="ENST00000374412.8">
    <property type="protein sequence ID" value="ENSP00000363533.3"/>
    <property type="RefSeq nucleotide sequence ID" value="NM_001039845.3"/>
    <property type="RefSeq protein sequence ID" value="NP_001034934.1"/>
</dbReference>
<dbReference type="UCSC" id="uc002vbs.5">
    <molecule id="Q5I0G3-1"/>
    <property type="organism name" value="human"/>
</dbReference>
<dbReference type="AGR" id="HGNC:17836"/>
<dbReference type="CTD" id="130752"/>
<dbReference type="GeneCards" id="MDH1B"/>
<dbReference type="HGNC" id="HGNC:17836">
    <property type="gene designation" value="MDH1B"/>
</dbReference>
<dbReference type="HPA" id="ENSG00000138400">
    <property type="expression patterns" value="Tissue enhanced (choroid plexus, fallopian tube, testis)"/>
</dbReference>
<dbReference type="MalaCards" id="MDH1B"/>
<dbReference type="neXtProt" id="NX_Q5I0G3"/>
<dbReference type="OpenTargets" id="ENSG00000138400"/>
<dbReference type="PharmGKB" id="PA30715"/>
<dbReference type="VEuPathDB" id="HostDB:ENSG00000138400"/>
<dbReference type="eggNOG" id="KOG1496">
    <property type="taxonomic scope" value="Eukaryota"/>
</dbReference>
<dbReference type="GeneTree" id="ENSGT00530000063410"/>
<dbReference type="HOGENOM" id="CLU_1010232_0_0_1"/>
<dbReference type="InParanoid" id="Q5I0G3"/>
<dbReference type="OMA" id="QHPDVWE"/>
<dbReference type="OrthoDB" id="1510206at2759"/>
<dbReference type="PAN-GO" id="Q5I0G3">
    <property type="GO annotations" value="5 GO annotations based on evolutionary models"/>
</dbReference>
<dbReference type="PhylomeDB" id="Q5I0G3"/>
<dbReference type="TreeFam" id="TF329007"/>
<dbReference type="PathwayCommons" id="Q5I0G3"/>
<dbReference type="BioGRID-ORCS" id="130752">
    <property type="hits" value="10 hits in 1146 CRISPR screens"/>
</dbReference>
<dbReference type="GenomeRNAi" id="130752"/>
<dbReference type="Pharos" id="Q5I0G3">
    <property type="development level" value="Tdark"/>
</dbReference>
<dbReference type="PRO" id="PR:Q5I0G3"/>
<dbReference type="Proteomes" id="UP000005640">
    <property type="component" value="Chromosome 2"/>
</dbReference>
<dbReference type="RNAct" id="Q5I0G3">
    <property type="molecule type" value="protein"/>
</dbReference>
<dbReference type="Bgee" id="ENSG00000138400">
    <property type="expression patterns" value="Expressed in bronchial epithelial cell and 122 other cell types or tissues"/>
</dbReference>
<dbReference type="ExpressionAtlas" id="Q5I0G3">
    <property type="expression patterns" value="baseline and differential"/>
</dbReference>
<dbReference type="GO" id="GO:0030060">
    <property type="term" value="F:L-malate dehydrogenase (NAD+) activity"/>
    <property type="evidence" value="ECO:0000318"/>
    <property type="project" value="GO_Central"/>
</dbReference>
<dbReference type="GO" id="GO:0006108">
    <property type="term" value="P:malate metabolic process"/>
    <property type="evidence" value="ECO:0000318"/>
    <property type="project" value="GO_Central"/>
</dbReference>
<dbReference type="GO" id="GO:0006734">
    <property type="term" value="P:NADH metabolic process"/>
    <property type="evidence" value="ECO:0000318"/>
    <property type="project" value="GO_Central"/>
</dbReference>
<dbReference type="GO" id="GO:0006107">
    <property type="term" value="P:oxaloacetate metabolic process"/>
    <property type="evidence" value="ECO:0000318"/>
    <property type="project" value="GO_Central"/>
</dbReference>
<dbReference type="GO" id="GO:0006099">
    <property type="term" value="P:tricarboxylic acid cycle"/>
    <property type="evidence" value="ECO:0000318"/>
    <property type="project" value="GO_Central"/>
</dbReference>
<dbReference type="CDD" id="cd05295">
    <property type="entry name" value="MDH_like"/>
    <property type="match status" value="1"/>
</dbReference>
<dbReference type="FunFam" id="3.40.50.720:FF:000322">
    <property type="entry name" value="Putative malate dehydrogenase 1B"/>
    <property type="match status" value="1"/>
</dbReference>
<dbReference type="FunFam" id="3.90.110.10:FF:000006">
    <property type="entry name" value="putative malate dehydrogenase 1B"/>
    <property type="match status" value="1"/>
</dbReference>
<dbReference type="Gene3D" id="3.90.110.10">
    <property type="entry name" value="Lactate dehydrogenase/glycoside hydrolase, family 4, C-terminal"/>
    <property type="match status" value="1"/>
</dbReference>
<dbReference type="Gene3D" id="3.40.50.720">
    <property type="entry name" value="NAD(P)-binding Rossmann-like Domain"/>
    <property type="match status" value="1"/>
</dbReference>
<dbReference type="InterPro" id="IPR022383">
    <property type="entry name" value="Lactate/malate_DH_C"/>
</dbReference>
<dbReference type="InterPro" id="IPR015955">
    <property type="entry name" value="Lactate_DH/Glyco_Ohase_4_C"/>
</dbReference>
<dbReference type="InterPro" id="IPR010945">
    <property type="entry name" value="Malate_DH_type2"/>
</dbReference>
<dbReference type="InterPro" id="IPR036291">
    <property type="entry name" value="NAD(P)-bd_dom_sf"/>
</dbReference>
<dbReference type="PANTHER" id="PTHR23382">
    <property type="entry name" value="MALATE DEHYDROGENASE"/>
    <property type="match status" value="1"/>
</dbReference>
<dbReference type="Pfam" id="PF02866">
    <property type="entry name" value="Ldh_1_C"/>
    <property type="match status" value="1"/>
</dbReference>
<dbReference type="SUPFAM" id="SSF56327">
    <property type="entry name" value="LDH C-terminal domain-like"/>
    <property type="match status" value="1"/>
</dbReference>
<dbReference type="SUPFAM" id="SSF51735">
    <property type="entry name" value="NAD(P)-binding Rossmann-fold domains"/>
    <property type="match status" value="1"/>
</dbReference>
<name>MDH1B_HUMAN</name>
<proteinExistence type="evidence at protein level"/>
<feature type="chain" id="PRO_0000331435" description="Putative malate dehydrogenase 1B">
    <location>
        <begin position="1"/>
        <end position="518"/>
    </location>
</feature>
<feature type="splice variant" id="VSP_033199" description="In isoform 3." evidence="3">
    <location>
        <begin position="138"/>
        <end position="350"/>
    </location>
</feature>
<feature type="splice variant" id="VSP_033200" description="In isoform 3." evidence="3">
    <original>GHKDLVPDEEKNLAMSDAAEFPNQIPQTTFEKPQSLEFLNEFEGKTVES</original>
    <variation>DTPRINTLHPSIQSSWHSVLTITIRKR</variation>
    <location>
        <begin position="470"/>
        <end position="518"/>
    </location>
</feature>
<feature type="splice variant" id="VSP_033201" description="In isoform 2." evidence="2">
    <location>
        <position position="487"/>
    </location>
</feature>
<feature type="sequence variant" id="VAR_064729" description="Found in a renal cell carcinoma sample; somatic mutation." evidence="1">
    <original>L</original>
    <variation>I</variation>
    <location>
        <position position="48"/>
    </location>
</feature>
<feature type="sequence variant" id="VAR_042861" description="In dbSNP:rs2287631.">
    <original>E</original>
    <variation>D</variation>
    <location>
        <position position="510"/>
    </location>
</feature>
<feature type="sequence variant" id="VAR_042862" description="In dbSNP:rs2287632.">
    <original>T</original>
    <variation>A</variation>
    <location>
        <position position="515"/>
    </location>
</feature>
<feature type="sequence conflict" description="In Ref. 4; AAH33509." evidence="4" ref="4">
    <original>I</original>
    <variation>T</variation>
    <location sequence="Q5I0G3-3">
        <position position="261"/>
    </location>
</feature>